<feature type="chain" id="PRO_0000231598" description="26S proteasome non-ATPase regulatory subunit 1">
    <location>
        <begin position="1"/>
        <end position="953"/>
    </location>
</feature>
<feature type="repeat" description="PC 1">
    <location>
        <begin position="403"/>
        <end position="436"/>
    </location>
</feature>
<feature type="repeat" description="PC 2">
    <location>
        <begin position="441"/>
        <end position="474"/>
    </location>
</feature>
<feature type="repeat" description="PC 3">
    <location>
        <begin position="476"/>
        <end position="510"/>
    </location>
</feature>
<feature type="repeat" description="PC 4">
    <location>
        <begin position="511"/>
        <end position="545"/>
    </location>
</feature>
<feature type="repeat" description="PC 5">
    <location>
        <begin position="547"/>
        <end position="580"/>
    </location>
</feature>
<feature type="repeat" description="PC 6">
    <location>
        <begin position="581"/>
        <end position="616"/>
    </location>
</feature>
<feature type="repeat" description="PC 7">
    <location>
        <begin position="617"/>
        <end position="649"/>
    </location>
</feature>
<feature type="repeat" description="PC 8">
    <location>
        <begin position="651"/>
        <end position="685"/>
    </location>
</feature>
<feature type="repeat" description="PC 9">
    <location>
        <begin position="686"/>
        <end position="726"/>
    </location>
</feature>
<feature type="repeat" description="PC 10">
    <location>
        <begin position="729"/>
        <end position="761"/>
    </location>
</feature>
<feature type="region of interest" description="Disordered" evidence="2">
    <location>
        <begin position="277"/>
        <end position="319"/>
    </location>
</feature>
<feature type="region of interest" description="Disordered" evidence="2">
    <location>
        <begin position="839"/>
        <end position="881"/>
    </location>
</feature>
<feature type="region of interest" description="Disordered" evidence="2">
    <location>
        <begin position="930"/>
        <end position="953"/>
    </location>
</feature>
<feature type="compositionally biased region" description="Basic and acidic residues" evidence="2">
    <location>
        <begin position="290"/>
        <end position="303"/>
    </location>
</feature>
<feature type="compositionally biased region" description="Basic and acidic residues" evidence="2">
    <location>
        <begin position="842"/>
        <end position="852"/>
    </location>
</feature>
<feature type="compositionally biased region" description="Basic and acidic residues" evidence="2">
    <location>
        <begin position="859"/>
        <end position="872"/>
    </location>
</feature>
<feature type="compositionally biased region" description="Acidic residues" evidence="2">
    <location>
        <begin position="936"/>
        <end position="953"/>
    </location>
</feature>
<feature type="modified residue" description="N-acetylmethionine" evidence="1">
    <location>
        <position position="1"/>
    </location>
</feature>
<feature type="modified residue" description="Phosphothreonine" evidence="1">
    <location>
        <position position="273"/>
    </location>
</feature>
<feature type="modified residue" description="Phosphoserine" evidence="1">
    <location>
        <position position="290"/>
    </location>
</feature>
<feature type="modified residue" description="N6-acetyllysine" evidence="7">
    <location>
        <position position="310"/>
    </location>
</feature>
<feature type="modified residue" description="Phosphothreonine" evidence="4 5 6">
    <location>
        <position position="311"/>
    </location>
</feature>
<feature type="modified residue" description="Phosphoserine" evidence="4 5 6">
    <location>
        <position position="315"/>
    </location>
</feature>
<feature type="modified residue" description="N6-acetyllysine" evidence="7">
    <location>
        <position position="720"/>
    </location>
</feature>
<feature type="modified residue" description="Phosphothreonine" evidence="1">
    <location>
        <position position="830"/>
    </location>
</feature>
<feature type="modified residue" description="Phosphoserine" evidence="1">
    <location>
        <position position="834"/>
    </location>
</feature>
<comment type="function">
    <text evidence="1">Component of the 26S proteasome, a multiprotein complex involved in the ATP-dependent degradation of ubiquitinated proteins. This complex plays a key role in the maintenance of protein homeostasis by removing misfolded or damaged proteins, which could impair cellular functions, and by removing proteins whose functions are no longer required. Therefore, the proteasome participates in numerous cellular processes, including cell cycle progression, apoptosis, or DNA damage repair.</text>
</comment>
<comment type="subunit">
    <text evidence="1">Component of the 19S proteasome regulatory particle complex. The 26S proteasome consists of a 20S core particle (CP) and two 19S regulatory subunits (RP). The regulatory particle is made of a lid composed of 9 subunits, a base containing 6 ATPases and few additional components including PSMD1. Interacts with ADRM1. Interacts with ZFAND1 (By similarity).</text>
</comment>
<comment type="similarity">
    <text evidence="3">Belongs to the proteasome subunit S1 family.</text>
</comment>
<sequence length="953" mass="105730">MITSAAGIISLLDEEEPQLKEFALHKLNAVVNDFWAEISESVDKIEVLYEDEGFRSRQFAALVASKVFYHLGAFEESLNYALGAGDLFNVNDNSEYVETIIAKCIDHYTKQCVENADLPEGEKKPIDQRLEGIVNKMFQRCLDDHKYKQAIGIALETRRLDVFEKTILESNDVPGMLAYSLKLCMSLMQNKQFRNKVLRVLVKIYMNLEKPDFINVCQCLIFLDDPQAVSDILEKLVKEDNLLMAYQICFDLYESASQQFLSSVIQNLRTVGTPIASVPGSTNTGTVPGSEKDSDPMETEEKTASAVAGKTPDASPEPKDQTLKMIKILSGEMAIELHLQFLIRNNNTDLMILKNTKDAVRNSVCHTATVIANSFMHCGTTSDQFLRDNLEWLARATNWAKFTATASLGVIHKGHEKEALQLMATYLPKDTSPGSAYQEGGGLYALGLIHANHGGDIIDYLLNQLKNASNDIVRHGGSLGLGLAAMGTARQDVYDLLKTNLYQDDAVTGEAAGLALGLVMLGSKNAQAIEDMVGYAQETQHEKILRGLAVGIALVMYGRMEEADALIESLCRDKDPILRRSGMYTVAMAYCGSGNNKAIRRLLHVAVSDVNDDVRRAAVESLGFILFRTPEQCPSVVSLLSESYNPHVRYGAAMALGICCAGTGNKEAINLLEPMTNDPVNYVRQGALIASALIMIQQTEITCPKVNQFRQLYSKVINDKHDDVMAKFGAILAQGILDAGGHNVTISLQSRTGHTHMPSVVGVLVFTQFWFWFPLSHFLSLAYTPTCVIGLNKDLKMPKVQYKSNCKPSTFAYPAPLEVPKEKEKEKVSTAVLSITAKAKKKEKEKEKKEEEKMEVDEAEKKEEKEKKKEPEPNFQLLDNPARVMPAQLKVLSMTETCRYQPFKPLSIGGIIILKDTSEDVEELVEPVAAHGPKIEEEEQEPEPPEPFEYIDD</sequence>
<reference key="1">
    <citation type="journal article" date="2005" name="Science">
        <title>The transcriptional landscape of the mammalian genome.</title>
        <authorList>
            <person name="Carninci P."/>
            <person name="Kasukawa T."/>
            <person name="Katayama S."/>
            <person name="Gough J."/>
            <person name="Frith M.C."/>
            <person name="Maeda N."/>
            <person name="Oyama R."/>
            <person name="Ravasi T."/>
            <person name="Lenhard B."/>
            <person name="Wells C."/>
            <person name="Kodzius R."/>
            <person name="Shimokawa K."/>
            <person name="Bajic V.B."/>
            <person name="Brenner S.E."/>
            <person name="Batalov S."/>
            <person name="Forrest A.R."/>
            <person name="Zavolan M."/>
            <person name="Davis M.J."/>
            <person name="Wilming L.G."/>
            <person name="Aidinis V."/>
            <person name="Allen J.E."/>
            <person name="Ambesi-Impiombato A."/>
            <person name="Apweiler R."/>
            <person name="Aturaliya R.N."/>
            <person name="Bailey T.L."/>
            <person name="Bansal M."/>
            <person name="Baxter L."/>
            <person name="Beisel K.W."/>
            <person name="Bersano T."/>
            <person name="Bono H."/>
            <person name="Chalk A.M."/>
            <person name="Chiu K.P."/>
            <person name="Choudhary V."/>
            <person name="Christoffels A."/>
            <person name="Clutterbuck D.R."/>
            <person name="Crowe M.L."/>
            <person name="Dalla E."/>
            <person name="Dalrymple B.P."/>
            <person name="de Bono B."/>
            <person name="Della Gatta G."/>
            <person name="di Bernardo D."/>
            <person name="Down T."/>
            <person name="Engstrom P."/>
            <person name="Fagiolini M."/>
            <person name="Faulkner G."/>
            <person name="Fletcher C.F."/>
            <person name="Fukushima T."/>
            <person name="Furuno M."/>
            <person name="Futaki S."/>
            <person name="Gariboldi M."/>
            <person name="Georgii-Hemming P."/>
            <person name="Gingeras T.R."/>
            <person name="Gojobori T."/>
            <person name="Green R.E."/>
            <person name="Gustincich S."/>
            <person name="Harbers M."/>
            <person name="Hayashi Y."/>
            <person name="Hensch T.K."/>
            <person name="Hirokawa N."/>
            <person name="Hill D."/>
            <person name="Huminiecki L."/>
            <person name="Iacono M."/>
            <person name="Ikeo K."/>
            <person name="Iwama A."/>
            <person name="Ishikawa T."/>
            <person name="Jakt M."/>
            <person name="Kanapin A."/>
            <person name="Katoh M."/>
            <person name="Kawasawa Y."/>
            <person name="Kelso J."/>
            <person name="Kitamura H."/>
            <person name="Kitano H."/>
            <person name="Kollias G."/>
            <person name="Krishnan S.P."/>
            <person name="Kruger A."/>
            <person name="Kummerfeld S.K."/>
            <person name="Kurochkin I.V."/>
            <person name="Lareau L.F."/>
            <person name="Lazarevic D."/>
            <person name="Lipovich L."/>
            <person name="Liu J."/>
            <person name="Liuni S."/>
            <person name="McWilliam S."/>
            <person name="Madan Babu M."/>
            <person name="Madera M."/>
            <person name="Marchionni L."/>
            <person name="Matsuda H."/>
            <person name="Matsuzawa S."/>
            <person name="Miki H."/>
            <person name="Mignone F."/>
            <person name="Miyake S."/>
            <person name="Morris K."/>
            <person name="Mottagui-Tabar S."/>
            <person name="Mulder N."/>
            <person name="Nakano N."/>
            <person name="Nakauchi H."/>
            <person name="Ng P."/>
            <person name="Nilsson R."/>
            <person name="Nishiguchi S."/>
            <person name="Nishikawa S."/>
            <person name="Nori F."/>
            <person name="Ohara O."/>
            <person name="Okazaki Y."/>
            <person name="Orlando V."/>
            <person name="Pang K.C."/>
            <person name="Pavan W.J."/>
            <person name="Pavesi G."/>
            <person name="Pesole G."/>
            <person name="Petrovsky N."/>
            <person name="Piazza S."/>
            <person name="Reed J."/>
            <person name="Reid J.F."/>
            <person name="Ring B.Z."/>
            <person name="Ringwald M."/>
            <person name="Rost B."/>
            <person name="Ruan Y."/>
            <person name="Salzberg S.L."/>
            <person name="Sandelin A."/>
            <person name="Schneider C."/>
            <person name="Schoenbach C."/>
            <person name="Sekiguchi K."/>
            <person name="Semple C.A."/>
            <person name="Seno S."/>
            <person name="Sessa L."/>
            <person name="Sheng Y."/>
            <person name="Shibata Y."/>
            <person name="Shimada H."/>
            <person name="Shimada K."/>
            <person name="Silva D."/>
            <person name="Sinclair B."/>
            <person name="Sperling S."/>
            <person name="Stupka E."/>
            <person name="Sugiura K."/>
            <person name="Sultana R."/>
            <person name="Takenaka Y."/>
            <person name="Taki K."/>
            <person name="Tammoja K."/>
            <person name="Tan S.L."/>
            <person name="Tang S."/>
            <person name="Taylor M.S."/>
            <person name="Tegner J."/>
            <person name="Teichmann S.A."/>
            <person name="Ueda H.R."/>
            <person name="van Nimwegen E."/>
            <person name="Verardo R."/>
            <person name="Wei C.L."/>
            <person name="Yagi K."/>
            <person name="Yamanishi H."/>
            <person name="Zabarovsky E."/>
            <person name="Zhu S."/>
            <person name="Zimmer A."/>
            <person name="Hide W."/>
            <person name="Bult C."/>
            <person name="Grimmond S.M."/>
            <person name="Teasdale R.D."/>
            <person name="Liu E.T."/>
            <person name="Brusic V."/>
            <person name="Quackenbush J."/>
            <person name="Wahlestedt C."/>
            <person name="Mattick J.S."/>
            <person name="Hume D.A."/>
            <person name="Kai C."/>
            <person name="Sasaki D."/>
            <person name="Tomaru Y."/>
            <person name="Fukuda S."/>
            <person name="Kanamori-Katayama M."/>
            <person name="Suzuki M."/>
            <person name="Aoki J."/>
            <person name="Arakawa T."/>
            <person name="Iida J."/>
            <person name="Imamura K."/>
            <person name="Itoh M."/>
            <person name="Kato T."/>
            <person name="Kawaji H."/>
            <person name="Kawagashira N."/>
            <person name="Kawashima T."/>
            <person name="Kojima M."/>
            <person name="Kondo S."/>
            <person name="Konno H."/>
            <person name="Nakano K."/>
            <person name="Ninomiya N."/>
            <person name="Nishio T."/>
            <person name="Okada M."/>
            <person name="Plessy C."/>
            <person name="Shibata K."/>
            <person name="Shiraki T."/>
            <person name="Suzuki S."/>
            <person name="Tagami M."/>
            <person name="Waki K."/>
            <person name="Watahiki A."/>
            <person name="Okamura-Oho Y."/>
            <person name="Suzuki H."/>
            <person name="Kawai J."/>
            <person name="Hayashizaki Y."/>
        </authorList>
    </citation>
    <scope>NUCLEOTIDE SEQUENCE [LARGE SCALE MRNA]</scope>
    <source>
        <strain>C57BL/6J</strain>
        <tissue>Bone marrow</tissue>
    </source>
</reference>
<reference key="2">
    <citation type="journal article" date="2004" name="Genome Res.">
        <title>The status, quality, and expansion of the NIH full-length cDNA project: the Mammalian Gene Collection (MGC).</title>
        <authorList>
            <consortium name="The MGC Project Team"/>
        </authorList>
    </citation>
    <scope>NUCLEOTIDE SEQUENCE [LARGE SCALE MRNA]</scope>
    <source>
        <tissue>Brain</tissue>
    </source>
</reference>
<reference key="3">
    <citation type="journal article" date="2006" name="Circ. Res.">
        <title>Mapping the murine cardiac 26S proteasome complexes.</title>
        <authorList>
            <person name="Gomes A.V."/>
            <person name="Zong C."/>
            <person name="Edmondson R.D."/>
            <person name="Li X."/>
            <person name="Stefani E."/>
            <person name="Zhang J."/>
            <person name="Jones R.C."/>
            <person name="Thyparambil S."/>
            <person name="Wang G.W."/>
            <person name="Qiao X."/>
            <person name="Bardag-Gorce F."/>
            <person name="Ping P."/>
        </authorList>
    </citation>
    <scope>IDENTIFICATION IN THE 19S PROTEASOME REGULATORY COMPLEX</scope>
</reference>
<reference key="4">
    <citation type="journal article" date="2007" name="Proc. Natl. Acad. Sci. U.S.A.">
        <title>Large-scale phosphorylation analysis of mouse liver.</title>
        <authorList>
            <person name="Villen J."/>
            <person name="Beausoleil S.A."/>
            <person name="Gerber S.A."/>
            <person name="Gygi S.P."/>
        </authorList>
    </citation>
    <scope>PHOSPHORYLATION [LARGE SCALE ANALYSIS] AT THR-311 AND SER-315</scope>
    <scope>IDENTIFICATION BY MASS SPECTROMETRY [LARGE SCALE ANALYSIS]</scope>
    <source>
        <tissue>Liver</tissue>
    </source>
</reference>
<reference key="5">
    <citation type="journal article" date="2009" name="Mol. Cell. Proteomics">
        <title>Large scale localization of protein phosphorylation by use of electron capture dissociation mass spectrometry.</title>
        <authorList>
            <person name="Sweet S.M."/>
            <person name="Bailey C.M."/>
            <person name="Cunningham D.L."/>
            <person name="Heath J.K."/>
            <person name="Cooper H.J."/>
        </authorList>
    </citation>
    <scope>PHOSPHORYLATION [LARGE SCALE ANALYSIS] AT THR-311 AND SER-315</scope>
    <scope>IDENTIFICATION BY MASS SPECTROMETRY [LARGE SCALE ANALYSIS]</scope>
    <source>
        <tissue>Embryonic fibroblast</tissue>
    </source>
</reference>
<reference key="6">
    <citation type="journal article" date="2010" name="Cell">
        <title>A tissue-specific atlas of mouse protein phosphorylation and expression.</title>
        <authorList>
            <person name="Huttlin E.L."/>
            <person name="Jedrychowski M.P."/>
            <person name="Elias J.E."/>
            <person name="Goswami T."/>
            <person name="Rad R."/>
            <person name="Beausoleil S.A."/>
            <person name="Villen J."/>
            <person name="Haas W."/>
            <person name="Sowa M.E."/>
            <person name="Gygi S.P."/>
        </authorList>
    </citation>
    <scope>PHOSPHORYLATION [LARGE SCALE ANALYSIS] AT THR-311 AND SER-315</scope>
    <scope>IDENTIFICATION BY MASS SPECTROMETRY [LARGE SCALE ANALYSIS]</scope>
    <source>
        <tissue>Brain</tissue>
        <tissue>Brown adipose tissue</tissue>
        <tissue>Heart</tissue>
        <tissue>Kidney</tissue>
        <tissue>Liver</tissue>
        <tissue>Lung</tissue>
        <tissue>Pancreas</tissue>
        <tissue>Spleen</tissue>
        <tissue>Testis</tissue>
    </source>
</reference>
<reference key="7">
    <citation type="journal article" date="2013" name="Mol. Cell">
        <title>SIRT5-mediated lysine desuccinylation impacts diverse metabolic pathways.</title>
        <authorList>
            <person name="Park J."/>
            <person name="Chen Y."/>
            <person name="Tishkoff D.X."/>
            <person name="Peng C."/>
            <person name="Tan M."/>
            <person name="Dai L."/>
            <person name="Xie Z."/>
            <person name="Zhang Y."/>
            <person name="Zwaans B.M."/>
            <person name="Skinner M.E."/>
            <person name="Lombard D.B."/>
            <person name="Zhao Y."/>
        </authorList>
    </citation>
    <scope>ACETYLATION [LARGE SCALE ANALYSIS] AT LYS-310 AND LYS-720</scope>
    <scope>IDENTIFICATION BY MASS SPECTROMETRY [LARGE SCALE ANALYSIS]</scope>
    <source>
        <tissue>Embryonic fibroblast</tissue>
    </source>
</reference>
<name>PSMD1_MOUSE</name>
<keyword id="KW-0007">Acetylation</keyword>
<keyword id="KW-0597">Phosphoprotein</keyword>
<keyword id="KW-0647">Proteasome</keyword>
<keyword id="KW-1185">Reference proteome</keyword>
<keyword id="KW-0677">Repeat</keyword>
<organism>
    <name type="scientific">Mus musculus</name>
    <name type="common">Mouse</name>
    <dbReference type="NCBI Taxonomy" id="10090"/>
    <lineage>
        <taxon>Eukaryota</taxon>
        <taxon>Metazoa</taxon>
        <taxon>Chordata</taxon>
        <taxon>Craniata</taxon>
        <taxon>Vertebrata</taxon>
        <taxon>Euteleostomi</taxon>
        <taxon>Mammalia</taxon>
        <taxon>Eutheria</taxon>
        <taxon>Euarchontoglires</taxon>
        <taxon>Glires</taxon>
        <taxon>Rodentia</taxon>
        <taxon>Myomorpha</taxon>
        <taxon>Muroidea</taxon>
        <taxon>Muridae</taxon>
        <taxon>Murinae</taxon>
        <taxon>Mus</taxon>
        <taxon>Mus</taxon>
    </lineage>
</organism>
<accession>Q3TXS7</accession>
<accession>B2RRP8</accession>
<protein>
    <recommendedName>
        <fullName>26S proteasome non-ATPase regulatory subunit 1</fullName>
    </recommendedName>
    <alternativeName>
        <fullName>26S proteasome regulatory subunit RPN2</fullName>
    </alternativeName>
    <alternativeName>
        <fullName>26S proteasome regulatory subunit S1</fullName>
    </alternativeName>
</protein>
<dbReference type="EMBL" id="AK153386">
    <property type="protein sequence ID" value="BAE31950.1"/>
    <property type="molecule type" value="mRNA"/>
</dbReference>
<dbReference type="EMBL" id="AK159123">
    <property type="protein sequence ID" value="BAE34838.1"/>
    <property type="molecule type" value="mRNA"/>
</dbReference>
<dbReference type="EMBL" id="BC138526">
    <property type="protein sequence ID" value="AAI38527.1"/>
    <property type="molecule type" value="mRNA"/>
</dbReference>
<dbReference type="EMBL" id="BC138527">
    <property type="protein sequence ID" value="AAI38528.1"/>
    <property type="molecule type" value="mRNA"/>
</dbReference>
<dbReference type="CCDS" id="CCDS15117.1"/>
<dbReference type="RefSeq" id="NP_081633.1">
    <property type="nucleotide sequence ID" value="NM_027357.2"/>
</dbReference>
<dbReference type="SMR" id="Q3TXS7"/>
<dbReference type="BioGRID" id="213938">
    <property type="interactions" value="63"/>
</dbReference>
<dbReference type="FunCoup" id="Q3TXS7">
    <property type="interactions" value="2913"/>
</dbReference>
<dbReference type="IntAct" id="Q3TXS7">
    <property type="interactions" value="6"/>
</dbReference>
<dbReference type="MINT" id="Q3TXS7"/>
<dbReference type="STRING" id="10090.ENSMUSP00000027432"/>
<dbReference type="GlyGen" id="Q3TXS7">
    <property type="glycosylation" value="2 sites, 1 N-linked glycan (1 site), 1 O-linked glycan (1 site)"/>
</dbReference>
<dbReference type="iPTMnet" id="Q3TXS7"/>
<dbReference type="MetOSite" id="Q3TXS7"/>
<dbReference type="PhosphoSitePlus" id="Q3TXS7"/>
<dbReference type="SwissPalm" id="Q3TXS7"/>
<dbReference type="jPOST" id="Q3TXS7"/>
<dbReference type="PaxDb" id="10090-ENSMUSP00000027432"/>
<dbReference type="PeptideAtlas" id="Q3TXS7"/>
<dbReference type="ProteomicsDB" id="301989"/>
<dbReference type="Pumba" id="Q3TXS7"/>
<dbReference type="Antibodypedia" id="34412">
    <property type="antibodies" value="144 antibodies from 23 providers"/>
</dbReference>
<dbReference type="Ensembl" id="ENSMUST00000027432.9">
    <property type="protein sequence ID" value="ENSMUSP00000027432.9"/>
    <property type="gene ID" value="ENSMUSG00000026229.18"/>
</dbReference>
<dbReference type="GeneID" id="70247"/>
<dbReference type="KEGG" id="mmu:70247"/>
<dbReference type="UCSC" id="uc007buy.1">
    <property type="organism name" value="mouse"/>
</dbReference>
<dbReference type="AGR" id="MGI:1917497"/>
<dbReference type="CTD" id="5707"/>
<dbReference type="MGI" id="MGI:1917497">
    <property type="gene designation" value="Psmd1"/>
</dbReference>
<dbReference type="VEuPathDB" id="HostDB:ENSMUSG00000026229"/>
<dbReference type="eggNOG" id="KOG2062">
    <property type="taxonomic scope" value="Eukaryota"/>
</dbReference>
<dbReference type="GeneTree" id="ENSGT00940000153386"/>
<dbReference type="HOGENOM" id="CLU_002323_0_0_1"/>
<dbReference type="InParanoid" id="Q3TXS7"/>
<dbReference type="OMA" id="IMFGRQE"/>
<dbReference type="OrthoDB" id="261572at2759"/>
<dbReference type="PhylomeDB" id="Q3TXS7"/>
<dbReference type="TreeFam" id="TF105742"/>
<dbReference type="Reactome" id="R-MMU-1169091">
    <property type="pathway name" value="Activation of NF-kappaB in B cells"/>
</dbReference>
<dbReference type="Reactome" id="R-MMU-1234176">
    <property type="pathway name" value="Oxygen-dependent proline hydroxylation of Hypoxia-inducible Factor Alpha"/>
</dbReference>
<dbReference type="Reactome" id="R-MMU-1236978">
    <property type="pathway name" value="Cross-presentation of soluble exogenous antigens (endosomes)"/>
</dbReference>
<dbReference type="Reactome" id="R-MMU-174084">
    <property type="pathway name" value="Autodegradation of Cdh1 by Cdh1:APC/C"/>
</dbReference>
<dbReference type="Reactome" id="R-MMU-174154">
    <property type="pathway name" value="APC/C:Cdc20 mediated degradation of Securin"/>
</dbReference>
<dbReference type="Reactome" id="R-MMU-174178">
    <property type="pathway name" value="APC/C:Cdh1 mediated degradation of Cdc20 and other APC/C:Cdh1 targeted proteins in late mitosis/early G1"/>
</dbReference>
<dbReference type="Reactome" id="R-MMU-174184">
    <property type="pathway name" value="Cdc20:Phospho-APC/C mediated degradation of Cyclin A"/>
</dbReference>
<dbReference type="Reactome" id="R-MMU-187577">
    <property type="pathway name" value="SCF(Skp2)-mediated degradation of p27/p21"/>
</dbReference>
<dbReference type="Reactome" id="R-MMU-195253">
    <property type="pathway name" value="Degradation of beta-catenin by the destruction complex"/>
</dbReference>
<dbReference type="Reactome" id="R-MMU-202424">
    <property type="pathway name" value="Downstream TCR signaling"/>
</dbReference>
<dbReference type="Reactome" id="R-MMU-2467813">
    <property type="pathway name" value="Separation of Sister Chromatids"/>
</dbReference>
<dbReference type="Reactome" id="R-MMU-2871837">
    <property type="pathway name" value="FCERI mediated NF-kB activation"/>
</dbReference>
<dbReference type="Reactome" id="R-MMU-349425">
    <property type="pathway name" value="Autodegradation of the E3 ubiquitin ligase COP1"/>
</dbReference>
<dbReference type="Reactome" id="R-MMU-350562">
    <property type="pathway name" value="Regulation of ornithine decarboxylase (ODC)"/>
</dbReference>
<dbReference type="Reactome" id="R-MMU-382556">
    <property type="pathway name" value="ABC-family proteins mediated transport"/>
</dbReference>
<dbReference type="Reactome" id="R-MMU-450408">
    <property type="pathway name" value="AUF1 (hnRNP D0) binds and destabilizes mRNA"/>
</dbReference>
<dbReference type="Reactome" id="R-MMU-4608870">
    <property type="pathway name" value="Asymmetric localization of PCP proteins"/>
</dbReference>
<dbReference type="Reactome" id="R-MMU-4641257">
    <property type="pathway name" value="Degradation of AXIN"/>
</dbReference>
<dbReference type="Reactome" id="R-MMU-4641258">
    <property type="pathway name" value="Degradation of DVL"/>
</dbReference>
<dbReference type="Reactome" id="R-MMU-5358346">
    <property type="pathway name" value="Hedgehog ligand biogenesis"/>
</dbReference>
<dbReference type="Reactome" id="R-MMU-5607761">
    <property type="pathway name" value="Dectin-1 mediated noncanonical NF-kB signaling"/>
</dbReference>
<dbReference type="Reactome" id="R-MMU-5607764">
    <property type="pathway name" value="CLEC7A (Dectin-1) signaling"/>
</dbReference>
<dbReference type="Reactome" id="R-MMU-5610780">
    <property type="pathway name" value="Degradation of GLI1 by the proteasome"/>
</dbReference>
<dbReference type="Reactome" id="R-MMU-5610785">
    <property type="pathway name" value="GLI3 is processed to GLI3R by the proteasome"/>
</dbReference>
<dbReference type="Reactome" id="R-MMU-5632684">
    <property type="pathway name" value="Hedgehog 'on' state"/>
</dbReference>
<dbReference type="Reactome" id="R-MMU-5658442">
    <property type="pathway name" value="Regulation of RAS by GAPs"/>
</dbReference>
<dbReference type="Reactome" id="R-MMU-5668541">
    <property type="pathway name" value="TNFR2 non-canonical NF-kB pathway"/>
</dbReference>
<dbReference type="Reactome" id="R-MMU-5676590">
    <property type="pathway name" value="NIK--&gt;noncanonical NF-kB signaling"/>
</dbReference>
<dbReference type="Reactome" id="R-MMU-5687128">
    <property type="pathway name" value="MAPK6/MAPK4 signaling"/>
</dbReference>
<dbReference type="Reactome" id="R-MMU-5689603">
    <property type="pathway name" value="UCH proteinases"/>
</dbReference>
<dbReference type="Reactome" id="R-MMU-5689880">
    <property type="pathway name" value="Ub-specific processing proteases"/>
</dbReference>
<dbReference type="Reactome" id="R-MMU-6798695">
    <property type="pathway name" value="Neutrophil degranulation"/>
</dbReference>
<dbReference type="Reactome" id="R-MMU-68867">
    <property type="pathway name" value="Assembly of the pre-replicative complex"/>
</dbReference>
<dbReference type="Reactome" id="R-MMU-68949">
    <property type="pathway name" value="Orc1 removal from chromatin"/>
</dbReference>
<dbReference type="Reactome" id="R-MMU-69017">
    <property type="pathway name" value="CDK-mediated phosphorylation and removal of Cdc6"/>
</dbReference>
<dbReference type="Reactome" id="R-MMU-69481">
    <property type="pathway name" value="G2/M Checkpoints"/>
</dbReference>
<dbReference type="Reactome" id="R-MMU-69601">
    <property type="pathway name" value="Ubiquitin Mediated Degradation of Phosphorylated Cdc25A"/>
</dbReference>
<dbReference type="Reactome" id="R-MMU-75815">
    <property type="pathway name" value="Ubiquitin-dependent degradation of Cyclin D"/>
</dbReference>
<dbReference type="Reactome" id="R-MMU-8852276">
    <property type="pathway name" value="The role of GTSE1 in G2/M progression after G2 checkpoint"/>
</dbReference>
<dbReference type="Reactome" id="R-MMU-8854050">
    <property type="pathway name" value="FBXL7 down-regulates AURKA during mitotic entry and in early mitosis"/>
</dbReference>
<dbReference type="Reactome" id="R-MMU-8939236">
    <property type="pathway name" value="RUNX1 regulates transcription of genes involved in differentiation of HSCs"/>
</dbReference>
<dbReference type="Reactome" id="R-MMU-8939902">
    <property type="pathway name" value="Regulation of RUNX2 expression and activity"/>
</dbReference>
<dbReference type="Reactome" id="R-MMU-8941858">
    <property type="pathway name" value="Regulation of RUNX3 expression and activity"/>
</dbReference>
<dbReference type="Reactome" id="R-MMU-8948751">
    <property type="pathway name" value="Regulation of PTEN stability and activity"/>
</dbReference>
<dbReference type="Reactome" id="R-MMU-8951664">
    <property type="pathway name" value="Neddylation"/>
</dbReference>
<dbReference type="Reactome" id="R-MMU-9020702">
    <property type="pathway name" value="Interleukin-1 signaling"/>
</dbReference>
<dbReference type="Reactome" id="R-MMU-9755511">
    <property type="pathway name" value="KEAP1-NFE2L2 pathway"/>
</dbReference>
<dbReference type="Reactome" id="R-MMU-9762114">
    <property type="pathway name" value="GSK3B and BTRC:CUL1-mediated-degradation of NFE2L2"/>
</dbReference>
<dbReference type="Reactome" id="R-MMU-983168">
    <property type="pathway name" value="Antigen processing: Ubiquitination &amp; Proteasome degradation"/>
</dbReference>
<dbReference type="Reactome" id="R-MMU-9907900">
    <property type="pathway name" value="Proteasome assembly"/>
</dbReference>
<dbReference type="BioGRID-ORCS" id="70247">
    <property type="hits" value="27 hits in 79 CRISPR screens"/>
</dbReference>
<dbReference type="ChiTaRS" id="Psmd1">
    <property type="organism name" value="mouse"/>
</dbReference>
<dbReference type="PRO" id="PR:Q3TXS7"/>
<dbReference type="Proteomes" id="UP000000589">
    <property type="component" value="Chromosome 1"/>
</dbReference>
<dbReference type="RNAct" id="Q3TXS7">
    <property type="molecule type" value="protein"/>
</dbReference>
<dbReference type="Bgee" id="ENSMUSG00000026229">
    <property type="expression patterns" value="Expressed in presomitic mesoderm and 256 other cell types or tissues"/>
</dbReference>
<dbReference type="ExpressionAtlas" id="Q3TXS7">
    <property type="expression patterns" value="baseline and differential"/>
</dbReference>
<dbReference type="GO" id="GO:0022624">
    <property type="term" value="C:proteasome accessory complex"/>
    <property type="evidence" value="ECO:0000314"/>
    <property type="project" value="UniProtKB"/>
</dbReference>
<dbReference type="GO" id="GO:0000502">
    <property type="term" value="C:proteasome complex"/>
    <property type="evidence" value="ECO:0000314"/>
    <property type="project" value="MGI"/>
</dbReference>
<dbReference type="GO" id="GO:0030234">
    <property type="term" value="F:enzyme regulator activity"/>
    <property type="evidence" value="ECO:0007669"/>
    <property type="project" value="InterPro"/>
</dbReference>
<dbReference type="GO" id="GO:0031625">
    <property type="term" value="F:ubiquitin protein ligase binding"/>
    <property type="evidence" value="ECO:0007669"/>
    <property type="project" value="Ensembl"/>
</dbReference>
<dbReference type="GO" id="GO:0042176">
    <property type="term" value="P:regulation of protein catabolic process"/>
    <property type="evidence" value="ECO:0007669"/>
    <property type="project" value="InterPro"/>
</dbReference>
<dbReference type="FunFam" id="1.25.10.10:FF:000017">
    <property type="entry name" value="26S proteasome non-ATPase regulatory subunit 1"/>
    <property type="match status" value="1"/>
</dbReference>
<dbReference type="Gene3D" id="1.25.10.10">
    <property type="entry name" value="Leucine-rich Repeat Variant"/>
    <property type="match status" value="1"/>
</dbReference>
<dbReference type="InterPro" id="IPR016642">
    <property type="entry name" value="26S_Psome_Rpn2"/>
</dbReference>
<dbReference type="InterPro" id="IPR011989">
    <property type="entry name" value="ARM-like"/>
</dbReference>
<dbReference type="InterPro" id="IPR016024">
    <property type="entry name" value="ARM-type_fold"/>
</dbReference>
<dbReference type="InterPro" id="IPR002015">
    <property type="entry name" value="Proteasome/cyclosome_rpt"/>
</dbReference>
<dbReference type="InterPro" id="IPR048570">
    <property type="entry name" value="PSMD1_RPN2_N"/>
</dbReference>
<dbReference type="InterPro" id="IPR040623">
    <property type="entry name" value="RPN2_C"/>
</dbReference>
<dbReference type="PANTHER" id="PTHR10943">
    <property type="entry name" value="26S PROTEASOME NON-ATPASE REGULATORY SUBUNIT"/>
    <property type="match status" value="1"/>
</dbReference>
<dbReference type="PANTHER" id="PTHR10943:SF2">
    <property type="entry name" value="26S PROTEASOME NON-ATPASE REGULATORY SUBUNIT 1"/>
    <property type="match status" value="1"/>
</dbReference>
<dbReference type="Pfam" id="PF13646">
    <property type="entry name" value="HEAT_2"/>
    <property type="match status" value="1"/>
</dbReference>
<dbReference type="Pfam" id="PF01851">
    <property type="entry name" value="PC_rep"/>
    <property type="match status" value="4"/>
</dbReference>
<dbReference type="Pfam" id="PF18004">
    <property type="entry name" value="RPN2_C"/>
    <property type="match status" value="1"/>
</dbReference>
<dbReference type="Pfam" id="PF21505">
    <property type="entry name" value="RPN2_N"/>
    <property type="match status" value="1"/>
</dbReference>
<dbReference type="PIRSF" id="PIRSF015947">
    <property type="entry name" value="26S_Psome_Rpn2"/>
    <property type="match status" value="1"/>
</dbReference>
<dbReference type="SUPFAM" id="SSF48371">
    <property type="entry name" value="ARM repeat"/>
    <property type="match status" value="1"/>
</dbReference>
<evidence type="ECO:0000250" key="1">
    <source>
        <dbReference type="UniProtKB" id="Q99460"/>
    </source>
</evidence>
<evidence type="ECO:0000256" key="2">
    <source>
        <dbReference type="SAM" id="MobiDB-lite"/>
    </source>
</evidence>
<evidence type="ECO:0000305" key="3"/>
<evidence type="ECO:0007744" key="4">
    <source>
    </source>
</evidence>
<evidence type="ECO:0007744" key="5">
    <source>
    </source>
</evidence>
<evidence type="ECO:0007744" key="6">
    <source>
    </source>
</evidence>
<evidence type="ECO:0007744" key="7">
    <source>
    </source>
</evidence>
<gene>
    <name type="primary">Psmd1</name>
</gene>
<proteinExistence type="evidence at protein level"/>